<keyword id="KW-0903">Direct protein sequencing</keyword>
<keyword id="KW-1015">Disulfide bond</keyword>
<keyword id="KW-0528">Neurotoxin</keyword>
<keyword id="KW-0629">Postsynaptic neurotoxin</keyword>
<keyword id="KW-0964">Secreted</keyword>
<keyword id="KW-0800">Toxin</keyword>
<proteinExistence type="evidence at protein level"/>
<comment type="function">
    <text>Blocks neuromuscular transmission. Acts cooperatively to potentiate the activity of huwentoxin-I. Paralyzes locusts and kills mice following intracerebroventricular injection.</text>
</comment>
<comment type="subcellular location">
    <subcellularLocation>
        <location>Secreted</location>
    </subcellularLocation>
</comment>
<comment type="tissue specificity">
    <text>Expressed by the venom gland.</text>
</comment>
<comment type="similarity">
    <text evidence="2">Belongs to the neurotoxin 12 (Hwtx-2) family. 02 (Hwtx-2) subfamily.</text>
</comment>
<protein>
    <recommendedName>
        <fullName>U1-theraphotoxin-Hs1f</fullName>
        <shortName>U1-TRTX-Hs1f</shortName>
    </recommendedName>
    <alternativeName>
        <fullName>Huwentoxin-8</fullName>
    </alternativeName>
    <alternativeName>
        <fullName>Huwentoxin-VIII</fullName>
        <shortName>HwTx-VIII</shortName>
    </alternativeName>
</protein>
<feature type="peptide" id="PRO_0000044984" description="U1-theraphotoxin-Hs1f">
    <location>
        <begin position="1"/>
        <end position="35"/>
    </location>
</feature>
<feature type="disulfide bond" evidence="1">
    <location>
        <begin position="3"/>
        <end position="16"/>
    </location>
</feature>
<feature type="disulfide bond" evidence="1">
    <location>
        <begin position="7"/>
        <end position="27"/>
    </location>
</feature>
<feature type="disulfide bond" evidence="1">
    <location>
        <begin position="21"/>
        <end position="32"/>
    </location>
</feature>
<dbReference type="SMR" id="P68422"/>
<dbReference type="ArachnoServer" id="AS000336">
    <property type="toxin name" value="U1-theraphotoxin-Hs1f"/>
</dbReference>
<dbReference type="GO" id="GO:0005576">
    <property type="term" value="C:extracellular region"/>
    <property type="evidence" value="ECO:0007669"/>
    <property type="project" value="UniProtKB-SubCell"/>
</dbReference>
<dbReference type="GO" id="GO:0035792">
    <property type="term" value="C:host cell postsynaptic membrane"/>
    <property type="evidence" value="ECO:0007669"/>
    <property type="project" value="UniProtKB-KW"/>
</dbReference>
<dbReference type="GO" id="GO:0090729">
    <property type="term" value="F:toxin activity"/>
    <property type="evidence" value="ECO:0007669"/>
    <property type="project" value="UniProtKB-KW"/>
</dbReference>
<dbReference type="InterPro" id="IPR012625">
    <property type="entry name" value="Hwtx-2-like"/>
</dbReference>
<dbReference type="Pfam" id="PF08089">
    <property type="entry name" value="Toxin_20"/>
    <property type="match status" value="1"/>
</dbReference>
<dbReference type="SUPFAM" id="SSF57059">
    <property type="entry name" value="omega toxin-like"/>
    <property type="match status" value="1"/>
</dbReference>
<dbReference type="PROSITE" id="PS60022">
    <property type="entry name" value="HWTX_2"/>
    <property type="match status" value="1"/>
</dbReference>
<reference key="1">
    <citation type="journal article" date="2003" name="Zhongguo Sheng Wu Hua Xue Yu Fen Zi Sheng Wu Xue Bao">
        <title>Purification and characterization of HWTX-VII and HWTX-VIII: two novel insecticidal neurotoxins from the Chinese bird spider Selenocosmia huwena.</title>
        <authorList>
            <person name="Dai J."/>
            <person name="Liang S.-P."/>
        </authorList>
    </citation>
    <scope>PROTEIN SEQUENCE</scope>
    <scope>CHARACTERIZATION</scope>
    <source>
        <tissue>Venom</tissue>
    </source>
</reference>
<reference key="2">
    <citation type="journal article" date="2004" name="Toxicon">
        <title>An overview of peptide toxins from the venom of the Chinese bird spider Selenocosmia huwena Wang [=Ornithoctonus huwena (Wang)].</title>
        <authorList>
            <person name="Liang S.-P."/>
        </authorList>
    </citation>
    <scope>REVIEW</scope>
</reference>
<sequence length="35" mass="3987">FECSISCEIEKKGESCKPKKCKGGWKCKFNMCVKV</sequence>
<accession>P68422</accession>
<organism>
    <name type="scientific">Cyriopagopus schmidti</name>
    <name type="common">Chinese bird spider</name>
    <name type="synonym">Haplopelma schmidti</name>
    <dbReference type="NCBI Taxonomy" id="29017"/>
    <lineage>
        <taxon>Eukaryota</taxon>
        <taxon>Metazoa</taxon>
        <taxon>Ecdysozoa</taxon>
        <taxon>Arthropoda</taxon>
        <taxon>Chelicerata</taxon>
        <taxon>Arachnida</taxon>
        <taxon>Araneae</taxon>
        <taxon>Mygalomorphae</taxon>
        <taxon>Theraphosidae</taxon>
        <taxon>Cyriopagopus</taxon>
    </lineage>
</organism>
<evidence type="ECO:0000250" key="1"/>
<evidence type="ECO:0000305" key="2"/>
<name>TXH8_CYRSC</name>